<name>ASZ1_MOUSE</name>
<gene>
    <name evidence="7" type="primary">Asz1</name>
    <name evidence="6" type="synonym">Gasz</name>
</gene>
<protein>
    <recommendedName>
        <fullName>Ankyrin repeat, SAM and basic leucine zipper domain-containing protein 1</fullName>
    </recommendedName>
    <alternativeName>
        <fullName>Germ cell-specific ankyrin, SAM and basic leucine zipper domain-containing protein</fullName>
    </alternativeName>
</protein>
<comment type="function">
    <text evidence="3">Plays a central role during spermatogenesis by repressing transposable elements and preventing their mobilization, which is essential for the germline integrity. Acts via the piRNA metabolic process, which mediates the repression of transposable elements during meiosis by forming complexes composed of piRNAs and Piwi proteins and governs the methylation and subsequent repression of transposons. Its association with pi-bodies suggests a participation in the primary piRNAs metabolic process. Required prior to the pachytene stage to facilitate the production of multiple types of piRNAs, including those associated with repeats involved in regulation of retrotransposons. May act by mediating protein-protein interactions during germ cell maturation.</text>
</comment>
<comment type="subunit">
    <text evidence="3">Interacts with DDX4, PIWIL1, RANBP9 and TDRD1.</text>
</comment>
<comment type="subcellular location">
    <subcellularLocation>
        <location evidence="2 3">Cytoplasm</location>
    </subcellularLocation>
    <text>Component of the meiotic nuage, also named P granule, a germ-cell-specific organelle required to repress transposon activity during meiosis. Specifically localizes to pi-bodies, a subset of the nuage which contains primary piRNAs.</text>
</comment>
<comment type="tissue specificity">
    <text evidence="2">Expressed exclusively in testis and ovary with higher levels in testis.</text>
</comment>
<comment type="developmental stage">
    <text evidence="2">Expressed in pachytene spermatocytes and early spermatids in the developing and adult testes and in oocytes in all stages of oogenesis in the ovary. Also expressed in preimplantive embryos.</text>
</comment>
<comment type="disruption phenotype">
    <text evidence="3">Mice are viable but show profound defect in male meiosis leading to male sterility. Testes display increased hypomethylation of retrotransposons and their subsequent expression as well as piRNAs suppression.</text>
</comment>
<comment type="sequence caution" evidence="4">
    <conflict type="erroneous gene model prediction">
        <sequence resource="EMBL-CDS" id="AAF30297"/>
    </conflict>
</comment>
<accession>Q8VD46</accession>
<accession>G3X8S0</accession>
<accession>Q6PD92</accession>
<accession>Q9JKQ7</accession>
<dbReference type="EMBL" id="AF459789">
    <property type="protein sequence ID" value="AAL67487.1"/>
    <property type="molecule type" value="mRNA"/>
</dbReference>
<dbReference type="EMBL" id="AF162137">
    <property type="protein sequence ID" value="AAF30297.1"/>
    <property type="status" value="ALT_SEQ"/>
    <property type="molecule type" value="Genomic_DNA"/>
</dbReference>
<dbReference type="EMBL" id="AC068561">
    <property type="status" value="NOT_ANNOTATED_CDS"/>
    <property type="molecule type" value="Genomic_DNA"/>
</dbReference>
<dbReference type="EMBL" id="AC158647">
    <property type="status" value="NOT_ANNOTATED_CDS"/>
    <property type="molecule type" value="Genomic_DNA"/>
</dbReference>
<dbReference type="EMBL" id="CH466533">
    <property type="protein sequence ID" value="EDL13867.1"/>
    <property type="molecule type" value="Genomic_DNA"/>
</dbReference>
<dbReference type="EMBL" id="BC058859">
    <property type="protein sequence ID" value="AAH58859.1"/>
    <property type="molecule type" value="mRNA"/>
</dbReference>
<dbReference type="CCDS" id="CCDS19929.1"/>
<dbReference type="RefSeq" id="NP_076218.3">
    <property type="nucleotide sequence ID" value="NM_023729.3"/>
</dbReference>
<dbReference type="SMR" id="Q8VD46"/>
<dbReference type="FunCoup" id="Q8VD46">
    <property type="interactions" value="253"/>
</dbReference>
<dbReference type="STRING" id="10090.ENSMUSP00000010940"/>
<dbReference type="GlyGen" id="Q8VD46">
    <property type="glycosylation" value="1 site"/>
</dbReference>
<dbReference type="iPTMnet" id="Q8VD46"/>
<dbReference type="PhosphoSitePlus" id="Q8VD46"/>
<dbReference type="SwissPalm" id="Q8VD46"/>
<dbReference type="PaxDb" id="10090-ENSMUSP00000010940"/>
<dbReference type="ProteomicsDB" id="281925"/>
<dbReference type="Antibodypedia" id="17481">
    <property type="antibodies" value="146 antibodies from 24 providers"/>
</dbReference>
<dbReference type="DNASU" id="74068"/>
<dbReference type="Ensembl" id="ENSMUST00000010940.11">
    <property type="protein sequence ID" value="ENSMUSP00000010940.5"/>
    <property type="gene ID" value="ENSMUSG00000010796.12"/>
</dbReference>
<dbReference type="GeneID" id="74068"/>
<dbReference type="KEGG" id="mmu:74068"/>
<dbReference type="UCSC" id="uc009bah.2">
    <property type="organism name" value="mouse"/>
</dbReference>
<dbReference type="AGR" id="MGI:1921318"/>
<dbReference type="CTD" id="136991"/>
<dbReference type="MGI" id="MGI:1921318">
    <property type="gene designation" value="Asz1"/>
</dbReference>
<dbReference type="VEuPathDB" id="HostDB:ENSMUSG00000010796"/>
<dbReference type="eggNOG" id="KOG0504">
    <property type="taxonomic scope" value="Eukaryota"/>
</dbReference>
<dbReference type="GeneTree" id="ENSGT00880000138051"/>
<dbReference type="HOGENOM" id="CLU_053259_0_0_1"/>
<dbReference type="InParanoid" id="Q8VD46"/>
<dbReference type="OMA" id="PFMFACR"/>
<dbReference type="OrthoDB" id="439236at2759"/>
<dbReference type="PhylomeDB" id="Q8VD46"/>
<dbReference type="TreeFam" id="TF352216"/>
<dbReference type="BioGRID-ORCS" id="74068">
    <property type="hits" value="3 hits in 80 CRISPR screens"/>
</dbReference>
<dbReference type="CD-CODE" id="DE1E139C">
    <property type="entry name" value="Chromatoid body"/>
</dbReference>
<dbReference type="ChiTaRS" id="Asz1">
    <property type="organism name" value="mouse"/>
</dbReference>
<dbReference type="PRO" id="PR:Q8VD46"/>
<dbReference type="Proteomes" id="UP000000589">
    <property type="component" value="Chromosome 6"/>
</dbReference>
<dbReference type="RNAct" id="Q8VD46">
    <property type="molecule type" value="protein"/>
</dbReference>
<dbReference type="Bgee" id="ENSMUSG00000010796">
    <property type="expression patterns" value="Expressed in spermatocyte and 46 other cell types or tissues"/>
</dbReference>
<dbReference type="ExpressionAtlas" id="Q8VD46">
    <property type="expression patterns" value="baseline and differential"/>
</dbReference>
<dbReference type="GO" id="GO:0005737">
    <property type="term" value="C:cytoplasm"/>
    <property type="evidence" value="ECO:0000314"/>
    <property type="project" value="MGI"/>
</dbReference>
<dbReference type="GO" id="GO:0005829">
    <property type="term" value="C:cytosol"/>
    <property type="evidence" value="ECO:0000304"/>
    <property type="project" value="Reactome"/>
</dbReference>
<dbReference type="GO" id="GO:0071546">
    <property type="term" value="C:pi-body"/>
    <property type="evidence" value="ECO:0000314"/>
    <property type="project" value="UniProtKB"/>
</dbReference>
<dbReference type="GO" id="GO:0007281">
    <property type="term" value="P:germ cell development"/>
    <property type="evidence" value="ECO:0000303"/>
    <property type="project" value="UniProtKB"/>
</dbReference>
<dbReference type="GO" id="GO:0007140">
    <property type="term" value="P:male meiotic nuclear division"/>
    <property type="evidence" value="ECO:0000315"/>
    <property type="project" value="UniProtKB"/>
</dbReference>
<dbReference type="GO" id="GO:0031047">
    <property type="term" value="P:regulatory ncRNA-mediated gene silencing"/>
    <property type="evidence" value="ECO:0007669"/>
    <property type="project" value="UniProtKB-KW"/>
</dbReference>
<dbReference type="GO" id="GO:0007283">
    <property type="term" value="P:spermatogenesis"/>
    <property type="evidence" value="ECO:0000315"/>
    <property type="project" value="UniProtKB"/>
</dbReference>
<dbReference type="GO" id="GO:0010526">
    <property type="term" value="P:transposable element silencing"/>
    <property type="evidence" value="ECO:0000315"/>
    <property type="project" value="UniProtKB"/>
</dbReference>
<dbReference type="CDD" id="cd09521">
    <property type="entry name" value="SAM_ASZ1"/>
    <property type="match status" value="1"/>
</dbReference>
<dbReference type="FunFam" id="1.25.40.20:FF:000192">
    <property type="entry name" value="Ankyrin repeat, SAM and basic leucine zipper domain-containing 1"/>
    <property type="match status" value="1"/>
</dbReference>
<dbReference type="FunFam" id="1.10.150.50:FF:000060">
    <property type="entry name" value="Ankyrin repeat, SAM and basic leucine zipper domain-containing protein 1"/>
    <property type="match status" value="1"/>
</dbReference>
<dbReference type="Gene3D" id="1.25.40.20">
    <property type="entry name" value="Ankyrin repeat-containing domain"/>
    <property type="match status" value="1"/>
</dbReference>
<dbReference type="Gene3D" id="1.10.150.50">
    <property type="entry name" value="Transcription Factor, Ets-1"/>
    <property type="match status" value="1"/>
</dbReference>
<dbReference type="InterPro" id="IPR002110">
    <property type="entry name" value="Ankyrin_rpt"/>
</dbReference>
<dbReference type="InterPro" id="IPR036770">
    <property type="entry name" value="Ankyrin_rpt-contain_sf"/>
</dbReference>
<dbReference type="InterPro" id="IPR042650">
    <property type="entry name" value="Asz1_SAM"/>
</dbReference>
<dbReference type="InterPro" id="IPR001660">
    <property type="entry name" value="SAM"/>
</dbReference>
<dbReference type="InterPro" id="IPR013761">
    <property type="entry name" value="SAM/pointed_sf"/>
</dbReference>
<dbReference type="PANTHER" id="PTHR24157">
    <property type="entry name" value="ANKYRIN REPEAT, SAM AND BASIC LEUCINE ZIPPER DOMAIN-CONTAINING PROTEIN 1"/>
    <property type="match status" value="1"/>
</dbReference>
<dbReference type="PANTHER" id="PTHR24157:SF3">
    <property type="entry name" value="ANKYRIN REPEAT, SAM AND BASIC LEUCINE ZIPPER DOMAIN-CONTAINING PROTEIN 1"/>
    <property type="match status" value="1"/>
</dbReference>
<dbReference type="Pfam" id="PF12796">
    <property type="entry name" value="Ank_2"/>
    <property type="match status" value="1"/>
</dbReference>
<dbReference type="Pfam" id="PF13637">
    <property type="entry name" value="Ank_4"/>
    <property type="match status" value="1"/>
</dbReference>
<dbReference type="Pfam" id="PF07647">
    <property type="entry name" value="SAM_2"/>
    <property type="match status" value="1"/>
</dbReference>
<dbReference type="PRINTS" id="PR01415">
    <property type="entry name" value="ANKYRIN"/>
</dbReference>
<dbReference type="SMART" id="SM00248">
    <property type="entry name" value="ANK"/>
    <property type="match status" value="5"/>
</dbReference>
<dbReference type="SMART" id="SM00454">
    <property type="entry name" value="SAM"/>
    <property type="match status" value="1"/>
</dbReference>
<dbReference type="SUPFAM" id="SSF48403">
    <property type="entry name" value="Ankyrin repeat"/>
    <property type="match status" value="1"/>
</dbReference>
<dbReference type="SUPFAM" id="SSF140860">
    <property type="entry name" value="Pseudo ankyrin repeat-like"/>
    <property type="match status" value="1"/>
</dbReference>
<dbReference type="SUPFAM" id="SSF47769">
    <property type="entry name" value="SAM/Pointed domain"/>
    <property type="match status" value="1"/>
</dbReference>
<dbReference type="PROSITE" id="PS50297">
    <property type="entry name" value="ANK_REP_REGION"/>
    <property type="match status" value="1"/>
</dbReference>
<dbReference type="PROSITE" id="PS50088">
    <property type="entry name" value="ANK_REPEAT"/>
    <property type="match status" value="3"/>
</dbReference>
<feature type="chain" id="PRO_0000066970" description="Ankyrin repeat, SAM and basic leucine zipper domain-containing protein 1">
    <location>
        <begin position="1"/>
        <end position="475"/>
    </location>
</feature>
<feature type="repeat" description="ANK 1" evidence="4">
    <location>
        <begin position="45"/>
        <end position="74"/>
    </location>
</feature>
<feature type="repeat" description="ANK 2" evidence="4">
    <location>
        <begin position="78"/>
        <end position="107"/>
    </location>
</feature>
<feature type="repeat" description="ANK 3" evidence="4">
    <location>
        <begin position="110"/>
        <end position="144"/>
    </location>
</feature>
<feature type="repeat" description="ANK 4" evidence="4">
    <location>
        <begin position="148"/>
        <end position="177"/>
    </location>
</feature>
<feature type="repeat" description="ANK 5" evidence="4">
    <location>
        <begin position="181"/>
        <end position="210"/>
    </location>
</feature>
<feature type="repeat" description="ANK 6" evidence="4">
    <location>
        <begin position="214"/>
        <end position="243"/>
    </location>
</feature>
<feature type="domain" description="SAM" evidence="4">
    <location>
        <begin position="272"/>
        <end position="334"/>
    </location>
</feature>
<feature type="region of interest" description="Disordered" evidence="1">
    <location>
        <begin position="1"/>
        <end position="25"/>
    </location>
</feature>
<feature type="modified residue" description="Phosphoserine" evidence="8">
    <location>
        <position position="17"/>
    </location>
</feature>
<feature type="modified residue" description="Phosphoserine" evidence="8">
    <location>
        <position position="18"/>
    </location>
</feature>
<feature type="modified residue" description="Phosphoserine" evidence="8">
    <location>
        <position position="20"/>
    </location>
</feature>
<feature type="sequence conflict" description="In Ref. 1; AAL67487." evidence="4" ref="1">
    <original>N</original>
    <variation>T</variation>
    <location>
        <position position="47"/>
    </location>
</feature>
<feature type="sequence conflict" description="In Ref. 5; AAH58859." evidence="4" ref="5">
    <original>T</original>
    <variation>A</variation>
    <location>
        <position position="249"/>
    </location>
</feature>
<feature type="sequence conflict" description="In Ref. 2; AAF30297." evidence="4" ref="2">
    <original>S</original>
    <variation>R</variation>
    <location>
        <position position="352"/>
    </location>
</feature>
<sequence>MAAGTLRGLAVAGGGESSDSEDDGWDIGYLDRSSQKLKRSLPVEEKNETFKKALTTGDISLVKELLDSGINVDSSFRYGWTPLMYAASVANAELVRFLLDRGANASFDKDKLTILISACSARGSEEQVLKCVELLLSRNADPNTACRRLMTPIMYAARDGHTQVVALLVAHGAEVNAQDENGYTALTWAARQGHKNVILKLLELGANKMLQTKDGRTPSEIAKRNKHLEIFNFLSLTLNPLEGKLQQLTKEETICKLLATDSDKEKDHIFSPYTAFGDLEIFLHGLGLEHMTDSLKEKDITLRHLLTMKKDELTKNGIASKDQQKILAALKELEVEEINFGKLPEVTKLEISGDEFLNFLLKLNKQCGHLITAVQNIITELPVNSHKIVLEWASPRNFTSVCEELVSNVEDLNEEVCRLKELIQKMQNERENDPTHIPLVEEVSTWKTRILKRSAVTVCGFGLLLFIGKLTLQRK</sequence>
<evidence type="ECO:0000256" key="1">
    <source>
        <dbReference type="SAM" id="MobiDB-lite"/>
    </source>
</evidence>
<evidence type="ECO:0000269" key="2">
    <source>
    </source>
</evidence>
<evidence type="ECO:0000269" key="3">
    <source>
    </source>
</evidence>
<evidence type="ECO:0000305" key="4"/>
<evidence type="ECO:0000312" key="5">
    <source>
        <dbReference type="EMBL" id="AAF30297.1"/>
    </source>
</evidence>
<evidence type="ECO:0000312" key="6">
    <source>
        <dbReference type="EMBL" id="AAL67487.1"/>
    </source>
</evidence>
<evidence type="ECO:0000312" key="7">
    <source>
        <dbReference type="MGI" id="MGI:1921318"/>
    </source>
</evidence>
<evidence type="ECO:0007744" key="8">
    <source>
    </source>
</evidence>
<proteinExistence type="evidence at protein level"/>
<organism>
    <name type="scientific">Mus musculus</name>
    <name type="common">Mouse</name>
    <dbReference type="NCBI Taxonomy" id="10090"/>
    <lineage>
        <taxon>Eukaryota</taxon>
        <taxon>Metazoa</taxon>
        <taxon>Chordata</taxon>
        <taxon>Craniata</taxon>
        <taxon>Vertebrata</taxon>
        <taxon>Euteleostomi</taxon>
        <taxon>Mammalia</taxon>
        <taxon>Eutheria</taxon>
        <taxon>Euarchontoglires</taxon>
        <taxon>Glires</taxon>
        <taxon>Rodentia</taxon>
        <taxon>Myomorpha</taxon>
        <taxon>Muroidea</taxon>
        <taxon>Muridae</taxon>
        <taxon>Murinae</taxon>
        <taxon>Mus</taxon>
        <taxon>Mus</taxon>
    </lineage>
</organism>
<reference evidence="4" key="1">
    <citation type="journal article" date="2002" name="Mol. Endocrinol.">
        <title>Identification of Gasz, an evolutionarily conserved gene expressed exclusively in germ cells and encoding a protein with four ankyrin repeats, a sterile-alpha motif, and a basic leucine zipper.</title>
        <authorList>
            <person name="Yan W."/>
            <person name="Rajkovic A."/>
            <person name="Viveiros M.M."/>
            <person name="Burns K.H."/>
            <person name="Eppig J.J."/>
            <person name="Matzuk M.M."/>
        </authorList>
    </citation>
    <scope>NUCLEOTIDE SEQUENCE [MRNA]</scope>
    <scope>SUBCELLULAR LOCATION</scope>
    <scope>TISSUE SPECIFICITY</scope>
    <scope>DEVELOPMENTAL STAGE</scope>
    <source>
        <strain evidence="2">129/Sv</strain>
        <tissue evidence="2">Ovary</tissue>
        <tissue evidence="2">Testis</tissue>
    </source>
</reference>
<reference evidence="5" key="2">
    <citation type="journal article" date="2000" name="Proc. Natl. Acad. Sci. U.S.A.">
        <title>Comparative genomic sequence analysis of the human and mouse cystic fibrosis transmembrane conductance regulator genes.</title>
        <authorList>
            <person name="Ellsworth R.E."/>
            <person name="Jamison D.C."/>
            <person name="Touchman J.W."/>
            <person name="Chissoe S.L."/>
            <person name="Braden Maduro V.V."/>
            <person name="Bouffard G.G."/>
            <person name="Dietrich N.L."/>
            <person name="Beckstrom-Sternberg S.M."/>
            <person name="Iyer L.M."/>
            <person name="Weintraub L.A."/>
            <person name="Cotton M."/>
            <person name="Courtney L."/>
            <person name="Edwards J."/>
            <person name="Maupin R."/>
            <person name="Ozersky P."/>
            <person name="Rohlfing T."/>
            <person name="Wohldmann P."/>
            <person name="Miner T."/>
            <person name="Kemp K."/>
            <person name="Kramer J."/>
            <person name="Korf I."/>
            <person name="Pepin K."/>
            <person name="Antonacci-Fulton L."/>
            <person name="Fulton R.S."/>
            <person name="Minx P."/>
            <person name="Hillier L.W."/>
            <person name="Wilson R.K."/>
            <person name="Waterston R.H."/>
            <person name="Miller W."/>
            <person name="Green E.D."/>
        </authorList>
    </citation>
    <scope>NUCLEOTIDE SEQUENCE [GENOMIC DNA]</scope>
</reference>
<reference key="3">
    <citation type="journal article" date="2009" name="PLoS Biol.">
        <title>Lineage-specific biology revealed by a finished genome assembly of the mouse.</title>
        <authorList>
            <person name="Church D.M."/>
            <person name="Goodstadt L."/>
            <person name="Hillier L.W."/>
            <person name="Zody M.C."/>
            <person name="Goldstein S."/>
            <person name="She X."/>
            <person name="Bult C.J."/>
            <person name="Agarwala R."/>
            <person name="Cherry J.L."/>
            <person name="DiCuccio M."/>
            <person name="Hlavina W."/>
            <person name="Kapustin Y."/>
            <person name="Meric P."/>
            <person name="Maglott D."/>
            <person name="Birtle Z."/>
            <person name="Marques A.C."/>
            <person name="Graves T."/>
            <person name="Zhou S."/>
            <person name="Teague B."/>
            <person name="Potamousis K."/>
            <person name="Churas C."/>
            <person name="Place M."/>
            <person name="Herschleb J."/>
            <person name="Runnheim R."/>
            <person name="Forrest D."/>
            <person name="Amos-Landgraf J."/>
            <person name="Schwartz D.C."/>
            <person name="Cheng Z."/>
            <person name="Lindblad-Toh K."/>
            <person name="Eichler E.E."/>
            <person name="Ponting C.P."/>
        </authorList>
    </citation>
    <scope>NUCLEOTIDE SEQUENCE [LARGE SCALE GENOMIC DNA]</scope>
    <source>
        <strain>C57BL/6J</strain>
    </source>
</reference>
<reference key="4">
    <citation type="submission" date="2005-09" db="EMBL/GenBank/DDBJ databases">
        <authorList>
            <person name="Mural R.J."/>
            <person name="Adams M.D."/>
            <person name="Myers E.W."/>
            <person name="Smith H.O."/>
            <person name="Venter J.C."/>
        </authorList>
    </citation>
    <scope>NUCLEOTIDE SEQUENCE [LARGE SCALE GENOMIC DNA]</scope>
</reference>
<reference key="5">
    <citation type="journal article" date="2004" name="Genome Res.">
        <title>The status, quality, and expansion of the NIH full-length cDNA project: the Mammalian Gene Collection (MGC).</title>
        <authorList>
            <consortium name="The MGC Project Team"/>
        </authorList>
    </citation>
    <scope>NUCLEOTIDE SEQUENCE [LARGE SCALE MRNA]</scope>
    <source>
        <strain>C57BL/6J</strain>
        <tissue>Embryo</tissue>
    </source>
</reference>
<reference key="6">
    <citation type="journal article" date="2009" name="PLoS Genet.">
        <title>GASZ is essential for male meiosis and suppression of retrotransposon expression in the male germline.</title>
        <authorList>
            <person name="Ma L."/>
            <person name="Buchold G.M."/>
            <person name="Greenbaum M.P."/>
            <person name="Roy A."/>
            <person name="Burns K.H."/>
            <person name="Zhu H."/>
            <person name="Han D.Y."/>
            <person name="Harris R.A."/>
            <person name="Coarfa C."/>
            <person name="Gunaratne P.H."/>
            <person name="Yan W."/>
            <person name="Matzuk M.M."/>
        </authorList>
    </citation>
    <scope>FUNCTION</scope>
    <scope>SUBCELLULAR LOCATION</scope>
    <scope>DISRUPTION PHENOTYPE</scope>
    <scope>INTERACTION WITH DDX4; PIWIL1; RANBP9 AND TDRD1</scope>
</reference>
<reference key="7">
    <citation type="journal article" date="2010" name="Cell">
        <title>A tissue-specific atlas of mouse protein phosphorylation and expression.</title>
        <authorList>
            <person name="Huttlin E.L."/>
            <person name="Jedrychowski M.P."/>
            <person name="Elias J.E."/>
            <person name="Goswami T."/>
            <person name="Rad R."/>
            <person name="Beausoleil S.A."/>
            <person name="Villen J."/>
            <person name="Haas W."/>
            <person name="Sowa M.E."/>
            <person name="Gygi S.P."/>
        </authorList>
    </citation>
    <scope>PHOSPHORYLATION [LARGE SCALE ANALYSIS] AT SER-17; SER-18 AND SER-20</scope>
    <scope>IDENTIFICATION BY MASS SPECTROMETRY [LARGE SCALE ANALYSIS]</scope>
    <source>
        <tissue>Testis</tissue>
    </source>
</reference>
<keyword id="KW-0040">ANK repeat</keyword>
<keyword id="KW-0963">Cytoplasm</keyword>
<keyword id="KW-0217">Developmental protein</keyword>
<keyword id="KW-0221">Differentiation</keyword>
<keyword id="KW-0469">Meiosis</keyword>
<keyword id="KW-0597">Phosphoprotein</keyword>
<keyword id="KW-1185">Reference proteome</keyword>
<keyword id="KW-0677">Repeat</keyword>
<keyword id="KW-0943">RNA-mediated gene silencing</keyword>
<keyword id="KW-0744">Spermatogenesis</keyword>